<accession>Q9VRV7</accession>
<gene>
    <name evidence="10" type="primary">Sf3b6</name>
    <name evidence="10" type="ORF">CG13298</name>
</gene>
<proteinExistence type="evidence at protein level"/>
<organism evidence="9">
    <name type="scientific">Drosophila melanogaster</name>
    <name type="common">Fruit fly</name>
    <dbReference type="NCBI Taxonomy" id="7227"/>
    <lineage>
        <taxon>Eukaryota</taxon>
        <taxon>Metazoa</taxon>
        <taxon>Ecdysozoa</taxon>
        <taxon>Arthropoda</taxon>
        <taxon>Hexapoda</taxon>
        <taxon>Insecta</taxon>
        <taxon>Pterygota</taxon>
        <taxon>Neoptera</taxon>
        <taxon>Endopterygota</taxon>
        <taxon>Diptera</taxon>
        <taxon>Brachycera</taxon>
        <taxon>Muscomorpha</taxon>
        <taxon>Ephydroidea</taxon>
        <taxon>Drosophilidae</taxon>
        <taxon>Drosophila</taxon>
        <taxon>Sophophora</taxon>
    </lineage>
</organism>
<reference evidence="7" key="1">
    <citation type="journal article" date="2000" name="Science">
        <title>The genome sequence of Drosophila melanogaster.</title>
        <authorList>
            <person name="Adams M.D."/>
            <person name="Celniker S.E."/>
            <person name="Holt R.A."/>
            <person name="Evans C.A."/>
            <person name="Gocayne J.D."/>
            <person name="Amanatides P.G."/>
            <person name="Scherer S.E."/>
            <person name="Li P.W."/>
            <person name="Hoskins R.A."/>
            <person name="Galle R.F."/>
            <person name="George R.A."/>
            <person name="Lewis S.E."/>
            <person name="Richards S."/>
            <person name="Ashburner M."/>
            <person name="Henderson S.N."/>
            <person name="Sutton G.G."/>
            <person name="Wortman J.R."/>
            <person name="Yandell M.D."/>
            <person name="Zhang Q."/>
            <person name="Chen L.X."/>
            <person name="Brandon R.C."/>
            <person name="Rogers Y.-H.C."/>
            <person name="Blazej R.G."/>
            <person name="Champe M."/>
            <person name="Pfeiffer B.D."/>
            <person name="Wan K.H."/>
            <person name="Doyle C."/>
            <person name="Baxter E.G."/>
            <person name="Helt G."/>
            <person name="Nelson C.R."/>
            <person name="Miklos G.L.G."/>
            <person name="Abril J.F."/>
            <person name="Agbayani A."/>
            <person name="An H.-J."/>
            <person name="Andrews-Pfannkoch C."/>
            <person name="Baldwin D."/>
            <person name="Ballew R.M."/>
            <person name="Basu A."/>
            <person name="Baxendale J."/>
            <person name="Bayraktaroglu L."/>
            <person name="Beasley E.M."/>
            <person name="Beeson K.Y."/>
            <person name="Benos P.V."/>
            <person name="Berman B.P."/>
            <person name="Bhandari D."/>
            <person name="Bolshakov S."/>
            <person name="Borkova D."/>
            <person name="Botchan M.R."/>
            <person name="Bouck J."/>
            <person name="Brokstein P."/>
            <person name="Brottier P."/>
            <person name="Burtis K.C."/>
            <person name="Busam D.A."/>
            <person name="Butler H."/>
            <person name="Cadieu E."/>
            <person name="Center A."/>
            <person name="Chandra I."/>
            <person name="Cherry J.M."/>
            <person name="Cawley S."/>
            <person name="Dahlke C."/>
            <person name="Davenport L.B."/>
            <person name="Davies P."/>
            <person name="de Pablos B."/>
            <person name="Delcher A."/>
            <person name="Deng Z."/>
            <person name="Mays A.D."/>
            <person name="Dew I."/>
            <person name="Dietz S.M."/>
            <person name="Dodson K."/>
            <person name="Doup L.E."/>
            <person name="Downes M."/>
            <person name="Dugan-Rocha S."/>
            <person name="Dunkov B.C."/>
            <person name="Dunn P."/>
            <person name="Durbin K.J."/>
            <person name="Evangelista C.C."/>
            <person name="Ferraz C."/>
            <person name="Ferriera S."/>
            <person name="Fleischmann W."/>
            <person name="Fosler C."/>
            <person name="Gabrielian A.E."/>
            <person name="Garg N.S."/>
            <person name="Gelbart W.M."/>
            <person name="Glasser K."/>
            <person name="Glodek A."/>
            <person name="Gong F."/>
            <person name="Gorrell J.H."/>
            <person name="Gu Z."/>
            <person name="Guan P."/>
            <person name="Harris M."/>
            <person name="Harris N.L."/>
            <person name="Harvey D.A."/>
            <person name="Heiman T.J."/>
            <person name="Hernandez J.R."/>
            <person name="Houck J."/>
            <person name="Hostin D."/>
            <person name="Houston K.A."/>
            <person name="Howland T.J."/>
            <person name="Wei M.-H."/>
            <person name="Ibegwam C."/>
            <person name="Jalali M."/>
            <person name="Kalush F."/>
            <person name="Karpen G.H."/>
            <person name="Ke Z."/>
            <person name="Kennison J.A."/>
            <person name="Ketchum K.A."/>
            <person name="Kimmel B.E."/>
            <person name="Kodira C.D."/>
            <person name="Kraft C.L."/>
            <person name="Kravitz S."/>
            <person name="Kulp D."/>
            <person name="Lai Z."/>
            <person name="Lasko P."/>
            <person name="Lei Y."/>
            <person name="Levitsky A.A."/>
            <person name="Li J.H."/>
            <person name="Li Z."/>
            <person name="Liang Y."/>
            <person name="Lin X."/>
            <person name="Liu X."/>
            <person name="Mattei B."/>
            <person name="McIntosh T.C."/>
            <person name="McLeod M.P."/>
            <person name="McPherson D."/>
            <person name="Merkulov G."/>
            <person name="Milshina N.V."/>
            <person name="Mobarry C."/>
            <person name="Morris J."/>
            <person name="Moshrefi A."/>
            <person name="Mount S.M."/>
            <person name="Moy M."/>
            <person name="Murphy B."/>
            <person name="Murphy L."/>
            <person name="Muzny D.M."/>
            <person name="Nelson D.L."/>
            <person name="Nelson D.R."/>
            <person name="Nelson K.A."/>
            <person name="Nixon K."/>
            <person name="Nusskern D.R."/>
            <person name="Pacleb J.M."/>
            <person name="Palazzolo M."/>
            <person name="Pittman G.S."/>
            <person name="Pan S."/>
            <person name="Pollard J."/>
            <person name="Puri V."/>
            <person name="Reese M.G."/>
            <person name="Reinert K."/>
            <person name="Remington K."/>
            <person name="Saunders R.D.C."/>
            <person name="Scheeler F."/>
            <person name="Shen H."/>
            <person name="Shue B.C."/>
            <person name="Siden-Kiamos I."/>
            <person name="Simpson M."/>
            <person name="Skupski M.P."/>
            <person name="Smith T.J."/>
            <person name="Spier E."/>
            <person name="Spradling A.C."/>
            <person name="Stapleton M."/>
            <person name="Strong R."/>
            <person name="Sun E."/>
            <person name="Svirskas R."/>
            <person name="Tector C."/>
            <person name="Turner R."/>
            <person name="Venter E."/>
            <person name="Wang A.H."/>
            <person name="Wang X."/>
            <person name="Wang Z.-Y."/>
            <person name="Wassarman D.A."/>
            <person name="Weinstock G.M."/>
            <person name="Weissenbach J."/>
            <person name="Williams S.M."/>
            <person name="Woodage T."/>
            <person name="Worley K.C."/>
            <person name="Wu D."/>
            <person name="Yang S."/>
            <person name="Yao Q.A."/>
            <person name="Ye J."/>
            <person name="Yeh R.-F."/>
            <person name="Zaveri J.S."/>
            <person name="Zhan M."/>
            <person name="Zhang G."/>
            <person name="Zhao Q."/>
            <person name="Zheng L."/>
            <person name="Zheng X.H."/>
            <person name="Zhong F.N."/>
            <person name="Zhong W."/>
            <person name="Zhou X."/>
            <person name="Zhu S.C."/>
            <person name="Zhu X."/>
            <person name="Smith H.O."/>
            <person name="Gibbs R.A."/>
            <person name="Myers E.W."/>
            <person name="Rubin G.M."/>
            <person name="Venter J.C."/>
        </authorList>
    </citation>
    <scope>NUCLEOTIDE SEQUENCE [LARGE SCALE GENOMIC DNA]</scope>
    <source>
        <strain evidence="4">Berkeley</strain>
    </source>
</reference>
<reference key="2">
    <citation type="journal article" date="2002" name="Genome Biol.">
        <title>Annotation of the Drosophila melanogaster euchromatic genome: a systematic review.</title>
        <authorList>
            <person name="Misra S."/>
            <person name="Crosby M.A."/>
            <person name="Mungall C.J."/>
            <person name="Matthews B.B."/>
            <person name="Campbell K.S."/>
            <person name="Hradecky P."/>
            <person name="Huang Y."/>
            <person name="Kaminker J.S."/>
            <person name="Millburn G.H."/>
            <person name="Prochnik S.E."/>
            <person name="Smith C.D."/>
            <person name="Tupy J.L."/>
            <person name="Whitfield E.J."/>
            <person name="Bayraktaroglu L."/>
            <person name="Berman B.P."/>
            <person name="Bettencourt B.R."/>
            <person name="Celniker S.E."/>
            <person name="de Grey A.D.N.J."/>
            <person name="Drysdale R.A."/>
            <person name="Harris N.L."/>
            <person name="Richter J."/>
            <person name="Russo S."/>
            <person name="Schroeder A.J."/>
            <person name="Shu S.Q."/>
            <person name="Stapleton M."/>
            <person name="Yamada C."/>
            <person name="Ashburner M."/>
            <person name="Gelbart W.M."/>
            <person name="Rubin G.M."/>
            <person name="Lewis S.E."/>
        </authorList>
    </citation>
    <scope>GENOME REANNOTATION</scope>
    <source>
        <strain>Berkeley</strain>
    </source>
</reference>
<reference evidence="7" key="3">
    <citation type="journal article" date="2002" name="Genome Biol.">
        <title>A Drosophila full-length cDNA resource.</title>
        <authorList>
            <person name="Stapleton M."/>
            <person name="Carlson J.W."/>
            <person name="Brokstein P."/>
            <person name="Yu C."/>
            <person name="Champe M."/>
            <person name="George R.A."/>
            <person name="Guarin H."/>
            <person name="Kronmiller B."/>
            <person name="Pacleb J.M."/>
            <person name="Park S."/>
            <person name="Wan K.H."/>
            <person name="Rubin G.M."/>
            <person name="Celniker S.E."/>
        </authorList>
    </citation>
    <scope>NUCLEOTIDE SEQUENCE [LARGE SCALE MRNA]</scope>
    <source>
        <strain evidence="5">Berkeley</strain>
        <tissue evidence="5">Embryo</tissue>
    </source>
</reference>
<reference key="4">
    <citation type="journal article" date="2009" name="Mol. Cell. Biol.">
        <title>Conservation of the protein composition and electron microscopy structure of Drosophila melanogaster and human spliceosomal complexes.</title>
        <authorList>
            <person name="Herold N."/>
            <person name="Will C.L."/>
            <person name="Wolf E."/>
            <person name="Kastner B."/>
            <person name="Urlaub H."/>
            <person name="Luhrmann R."/>
        </authorList>
    </citation>
    <scope>IDENTIFICATION BY MASS SPECTROMETRY</scope>
    <scope>IDENTIFICATION IN THE SF3B COMPLEX</scope>
    <scope>ELECTRON MICROSCOPY OF THE SF3B COMPLEX</scope>
</reference>
<evidence type="ECO:0000250" key="1"/>
<evidence type="ECO:0000250" key="2">
    <source>
        <dbReference type="UniProtKB" id="Q9Y3B4"/>
    </source>
</evidence>
<evidence type="ECO:0000255" key="3">
    <source>
        <dbReference type="PROSITE-ProRule" id="PRU00176"/>
    </source>
</evidence>
<evidence type="ECO:0000269" key="4">
    <source>
    </source>
</evidence>
<evidence type="ECO:0000269" key="5">
    <source>
    </source>
</evidence>
<evidence type="ECO:0000269" key="6">
    <source>
    </source>
</evidence>
<evidence type="ECO:0000305" key="7"/>
<evidence type="ECO:0000305" key="8">
    <source>
    </source>
</evidence>
<evidence type="ECO:0000312" key="9">
    <source>
        <dbReference type="EMBL" id="AAL90341.1"/>
    </source>
</evidence>
<evidence type="ECO:0000312" key="10">
    <source>
        <dbReference type="FlyBase" id="FBgn0035692"/>
    </source>
</evidence>
<feature type="chain" id="PRO_0000081728" description="Splicing factor 3B subunit 6">
    <location>
        <begin position="1"/>
        <end position="121"/>
    </location>
</feature>
<feature type="domain" description="RRM" evidence="3">
    <location>
        <begin position="15"/>
        <end position="90"/>
    </location>
</feature>
<feature type="region of interest" description="Interaction with pre-mRNA branch site" evidence="1">
    <location>
        <begin position="12"/>
        <end position="25"/>
    </location>
</feature>
<comment type="function">
    <text evidence="2 8">Involved in pre-mRNA splicing as a component of the splicing factor SF3B complex (Probable). SF3B complex is required for 'A' complex assembly formed by the stable binding of U2 snRNP to the branchpoint sequence (BPS) in pre-mRNA (By similarity). Directly contacts the pre-mRNA branch site adenosine for the first catalytic step of splicing (By similarity). Enters the spliceosome and associates with the pre-mRNA branch site as part of the 17S U2 or, in the case of the minor spliceosome, as part of the 18S U11/U12 snRNP complex, and thus may facilitate the interaction of these snRNP with the branch sites of U2 and U12 respectively (By similarity).</text>
</comment>
<comment type="subunit">
    <text evidence="2 6">Component of splicing factor SF3B complex (PubMed:18981222). Component of the U11/U12 snRNPs that are part of the U12-type spliceosome (By similarity).</text>
</comment>
<comment type="subcellular location">
    <subcellularLocation>
        <location evidence="6">Nucleus</location>
    </subcellularLocation>
</comment>
<comment type="similarity">
    <text evidence="7">Belongs to the SF3B6 family.</text>
</comment>
<name>SF3B6_DROME</name>
<dbReference type="EMBL" id="AE014296">
    <property type="protein sequence ID" value="AAF50675.1"/>
    <property type="molecule type" value="Genomic_DNA"/>
</dbReference>
<dbReference type="EMBL" id="AY089603">
    <property type="protein sequence ID" value="AAL90341.1"/>
    <property type="molecule type" value="mRNA"/>
</dbReference>
<dbReference type="RefSeq" id="NP_648037.1">
    <property type="nucleotide sequence ID" value="NM_139780.3"/>
</dbReference>
<dbReference type="SMR" id="Q9VRV7"/>
<dbReference type="BioGRID" id="64173">
    <property type="interactions" value="6"/>
</dbReference>
<dbReference type="DIP" id="DIP-21174N"/>
<dbReference type="FunCoup" id="Q9VRV7">
    <property type="interactions" value="2060"/>
</dbReference>
<dbReference type="IntAct" id="Q9VRV7">
    <property type="interactions" value="6"/>
</dbReference>
<dbReference type="STRING" id="7227.FBpp0076723"/>
<dbReference type="PaxDb" id="7227-FBpp0076723"/>
<dbReference type="DNASU" id="38720"/>
<dbReference type="EnsemblMetazoa" id="FBtr0077015">
    <property type="protein sequence ID" value="FBpp0076723"/>
    <property type="gene ID" value="FBgn0035692"/>
</dbReference>
<dbReference type="GeneID" id="38720"/>
<dbReference type="KEGG" id="dme:Dmel_CG13298"/>
<dbReference type="UCSC" id="CG13298-RA">
    <property type="organism name" value="d. melanogaster"/>
</dbReference>
<dbReference type="AGR" id="FB:FBgn0035692"/>
<dbReference type="CTD" id="51639"/>
<dbReference type="FlyBase" id="FBgn0035692">
    <property type="gene designation" value="Sf3b6"/>
</dbReference>
<dbReference type="VEuPathDB" id="VectorBase:FBgn0035692"/>
<dbReference type="eggNOG" id="KOG0114">
    <property type="taxonomic scope" value="Eukaryota"/>
</dbReference>
<dbReference type="GeneTree" id="ENSGT00390000005908"/>
<dbReference type="HOGENOM" id="CLU_012062_25_2_1"/>
<dbReference type="InParanoid" id="Q9VRV7"/>
<dbReference type="OMA" id="HQPDKMV"/>
<dbReference type="OrthoDB" id="275748at2759"/>
<dbReference type="PhylomeDB" id="Q9VRV7"/>
<dbReference type="BioGRID-ORCS" id="38720">
    <property type="hits" value="1 hit in 1 CRISPR screen"/>
</dbReference>
<dbReference type="ChiTaRS" id="Sf3b6">
    <property type="organism name" value="fly"/>
</dbReference>
<dbReference type="GenomeRNAi" id="38720"/>
<dbReference type="PRO" id="PR:Q9VRV7"/>
<dbReference type="Proteomes" id="UP000000803">
    <property type="component" value="Chromosome 3L"/>
</dbReference>
<dbReference type="Bgee" id="FBgn0035692">
    <property type="expression patterns" value="Expressed in T neuron T4a (Drosophila) in embryonic/larval optic lobe (Drosophila) and 166 other cell types or tissues"/>
</dbReference>
<dbReference type="ExpressionAtlas" id="Q9VRV7">
    <property type="expression patterns" value="baseline and differential"/>
</dbReference>
<dbReference type="GO" id="GO:0071013">
    <property type="term" value="C:catalytic step 2 spliceosome"/>
    <property type="evidence" value="ECO:0007005"/>
    <property type="project" value="FlyBase"/>
</dbReference>
<dbReference type="GO" id="GO:0071011">
    <property type="term" value="C:precatalytic spliceosome"/>
    <property type="evidence" value="ECO:0007005"/>
    <property type="project" value="FlyBase"/>
</dbReference>
<dbReference type="GO" id="GO:0003729">
    <property type="term" value="F:mRNA binding"/>
    <property type="evidence" value="ECO:0000250"/>
    <property type="project" value="FlyBase"/>
</dbReference>
<dbReference type="GO" id="GO:0000398">
    <property type="term" value="P:mRNA splicing, via spliceosome"/>
    <property type="evidence" value="ECO:0000305"/>
    <property type="project" value="FlyBase"/>
</dbReference>
<dbReference type="CDD" id="cd12241">
    <property type="entry name" value="RRM_SF3B14"/>
    <property type="match status" value="1"/>
</dbReference>
<dbReference type="FunFam" id="3.30.70.330:FF:000106">
    <property type="entry name" value="Splicing factor 3b, subunit 6"/>
    <property type="match status" value="1"/>
</dbReference>
<dbReference type="Gene3D" id="3.30.70.330">
    <property type="match status" value="1"/>
</dbReference>
<dbReference type="InterPro" id="IPR012677">
    <property type="entry name" value="Nucleotide-bd_a/b_plait_sf"/>
</dbReference>
<dbReference type="InterPro" id="IPR035979">
    <property type="entry name" value="RBD_domain_sf"/>
</dbReference>
<dbReference type="InterPro" id="IPR000504">
    <property type="entry name" value="RRM_dom"/>
</dbReference>
<dbReference type="InterPro" id="IPR050374">
    <property type="entry name" value="RRT5_SRSF_SR"/>
</dbReference>
<dbReference type="InterPro" id="IPR034150">
    <property type="entry name" value="SF3B6_RRM"/>
</dbReference>
<dbReference type="PANTHER" id="PTHR23003">
    <property type="entry name" value="RNA RECOGNITION MOTIF RRM DOMAIN CONTAINING PROTEIN"/>
    <property type="match status" value="1"/>
</dbReference>
<dbReference type="Pfam" id="PF00076">
    <property type="entry name" value="RRM_1"/>
    <property type="match status" value="1"/>
</dbReference>
<dbReference type="SMART" id="SM00360">
    <property type="entry name" value="RRM"/>
    <property type="match status" value="1"/>
</dbReference>
<dbReference type="SUPFAM" id="SSF54928">
    <property type="entry name" value="RNA-binding domain, RBD"/>
    <property type="match status" value="1"/>
</dbReference>
<dbReference type="PROSITE" id="PS50102">
    <property type="entry name" value="RRM"/>
    <property type="match status" value="1"/>
</dbReference>
<keyword id="KW-0507">mRNA processing</keyword>
<keyword id="KW-0508">mRNA splicing</keyword>
<keyword id="KW-0539">Nucleus</keyword>
<keyword id="KW-1185">Reference proteome</keyword>
<keyword id="KW-0694">RNA-binding</keyword>
<sequence length="121" mass="14194">MNKRNHIRLPPEVNRLLYVRNLPYKITSDEMYDIFGKFGAIRQIRVGNTPETRGTAFVVYEDIFDAKNACDHLSGFNVCNRYLVVLYYQSNKAFKRVDMDKKQEELNNIKAKYNLKTPEAP</sequence>
<protein>
    <recommendedName>
        <fullName evidence="10">Splicing factor 3B subunit 6</fullName>
    </recommendedName>
    <alternativeName>
        <fullName>Pre-mRNA branch site p14-like protein</fullName>
    </alternativeName>
</protein>